<dbReference type="EC" id="6.3.2.1" evidence="1"/>
<dbReference type="EMBL" id="CP000792">
    <property type="protein sequence ID" value="EAT97401.1"/>
    <property type="molecule type" value="Genomic_DNA"/>
</dbReference>
<dbReference type="RefSeq" id="WP_012139951.1">
    <property type="nucleotide sequence ID" value="NC_009802.2"/>
</dbReference>
<dbReference type="SMR" id="A7ZE20"/>
<dbReference type="STRING" id="360104.CCC13826_0583"/>
<dbReference type="KEGG" id="cco:CCC13826_0583"/>
<dbReference type="eggNOG" id="COG0414">
    <property type="taxonomic scope" value="Bacteria"/>
</dbReference>
<dbReference type="HOGENOM" id="CLU_047148_0_0_7"/>
<dbReference type="OrthoDB" id="9773087at2"/>
<dbReference type="UniPathway" id="UPA00028">
    <property type="reaction ID" value="UER00005"/>
</dbReference>
<dbReference type="Proteomes" id="UP000001121">
    <property type="component" value="Chromosome"/>
</dbReference>
<dbReference type="GO" id="GO:0005829">
    <property type="term" value="C:cytosol"/>
    <property type="evidence" value="ECO:0007669"/>
    <property type="project" value="TreeGrafter"/>
</dbReference>
<dbReference type="GO" id="GO:0005524">
    <property type="term" value="F:ATP binding"/>
    <property type="evidence" value="ECO:0007669"/>
    <property type="project" value="UniProtKB-KW"/>
</dbReference>
<dbReference type="GO" id="GO:0004592">
    <property type="term" value="F:pantoate-beta-alanine ligase activity"/>
    <property type="evidence" value="ECO:0007669"/>
    <property type="project" value="UniProtKB-UniRule"/>
</dbReference>
<dbReference type="GO" id="GO:0015940">
    <property type="term" value="P:pantothenate biosynthetic process"/>
    <property type="evidence" value="ECO:0007669"/>
    <property type="project" value="UniProtKB-UniRule"/>
</dbReference>
<dbReference type="CDD" id="cd00560">
    <property type="entry name" value="PanC"/>
    <property type="match status" value="1"/>
</dbReference>
<dbReference type="Gene3D" id="3.40.50.620">
    <property type="entry name" value="HUPs"/>
    <property type="match status" value="1"/>
</dbReference>
<dbReference type="Gene3D" id="3.30.1300.10">
    <property type="entry name" value="Pantoate-beta-alanine ligase, C-terminal domain"/>
    <property type="match status" value="1"/>
</dbReference>
<dbReference type="HAMAP" id="MF_00158">
    <property type="entry name" value="PanC"/>
    <property type="match status" value="1"/>
</dbReference>
<dbReference type="InterPro" id="IPR003721">
    <property type="entry name" value="Pantoate_ligase"/>
</dbReference>
<dbReference type="InterPro" id="IPR042176">
    <property type="entry name" value="Pantoate_ligase_C"/>
</dbReference>
<dbReference type="InterPro" id="IPR014729">
    <property type="entry name" value="Rossmann-like_a/b/a_fold"/>
</dbReference>
<dbReference type="NCBIfam" id="TIGR00018">
    <property type="entry name" value="panC"/>
    <property type="match status" value="1"/>
</dbReference>
<dbReference type="PANTHER" id="PTHR21299">
    <property type="entry name" value="CYTIDYLATE KINASE/PANTOATE-BETA-ALANINE LIGASE"/>
    <property type="match status" value="1"/>
</dbReference>
<dbReference type="PANTHER" id="PTHR21299:SF1">
    <property type="entry name" value="PANTOATE--BETA-ALANINE LIGASE"/>
    <property type="match status" value="1"/>
</dbReference>
<dbReference type="Pfam" id="PF02569">
    <property type="entry name" value="Pantoate_ligase"/>
    <property type="match status" value="1"/>
</dbReference>
<dbReference type="SUPFAM" id="SSF52374">
    <property type="entry name" value="Nucleotidylyl transferase"/>
    <property type="match status" value="1"/>
</dbReference>
<protein>
    <recommendedName>
        <fullName evidence="1">Pantothenate synthetase</fullName>
        <shortName evidence="1">PS</shortName>
        <ecNumber evidence="1">6.3.2.1</ecNumber>
    </recommendedName>
    <alternativeName>
        <fullName evidence="1">Pantoate--beta-alanine ligase</fullName>
    </alternativeName>
    <alternativeName>
        <fullName evidence="1">Pantoate-activating enzyme</fullName>
    </alternativeName>
</protein>
<comment type="function">
    <text evidence="1">Catalyzes the condensation of pantoate with beta-alanine in an ATP-dependent reaction via a pantoyl-adenylate intermediate.</text>
</comment>
<comment type="catalytic activity">
    <reaction evidence="1">
        <text>(R)-pantoate + beta-alanine + ATP = (R)-pantothenate + AMP + diphosphate + H(+)</text>
        <dbReference type="Rhea" id="RHEA:10912"/>
        <dbReference type="ChEBI" id="CHEBI:15378"/>
        <dbReference type="ChEBI" id="CHEBI:15980"/>
        <dbReference type="ChEBI" id="CHEBI:29032"/>
        <dbReference type="ChEBI" id="CHEBI:30616"/>
        <dbReference type="ChEBI" id="CHEBI:33019"/>
        <dbReference type="ChEBI" id="CHEBI:57966"/>
        <dbReference type="ChEBI" id="CHEBI:456215"/>
        <dbReference type="EC" id="6.3.2.1"/>
    </reaction>
</comment>
<comment type="pathway">
    <text evidence="1">Cofactor biosynthesis; (R)-pantothenate biosynthesis; (R)-pantothenate from (R)-pantoate and beta-alanine: step 1/1.</text>
</comment>
<comment type="subunit">
    <text evidence="1">Homodimer.</text>
</comment>
<comment type="subcellular location">
    <subcellularLocation>
        <location evidence="1">Cytoplasm</location>
    </subcellularLocation>
</comment>
<comment type="miscellaneous">
    <text evidence="1">The reaction proceeds by a bi uni uni bi ping pong mechanism.</text>
</comment>
<comment type="similarity">
    <text evidence="1">Belongs to the pantothenate synthetase family.</text>
</comment>
<reference key="1">
    <citation type="submission" date="2007-10" db="EMBL/GenBank/DDBJ databases">
        <title>Genome sequence of Campylobacter concisus 13826 isolated from human feces.</title>
        <authorList>
            <person name="Fouts D.E."/>
            <person name="Mongodin E.F."/>
            <person name="Puiu D."/>
            <person name="Sebastian Y."/>
            <person name="Miller W.G."/>
            <person name="Mandrell R.E."/>
            <person name="On S."/>
            <person name="Nelson K.E."/>
        </authorList>
    </citation>
    <scope>NUCLEOTIDE SEQUENCE [LARGE SCALE GENOMIC DNA]</scope>
    <source>
        <strain>13826</strain>
    </source>
</reference>
<organism>
    <name type="scientific">Campylobacter concisus (strain 13826)</name>
    <dbReference type="NCBI Taxonomy" id="360104"/>
    <lineage>
        <taxon>Bacteria</taxon>
        <taxon>Pseudomonadati</taxon>
        <taxon>Campylobacterota</taxon>
        <taxon>Epsilonproteobacteria</taxon>
        <taxon>Campylobacterales</taxon>
        <taxon>Campylobacteraceae</taxon>
        <taxon>Campylobacter</taxon>
    </lineage>
</organism>
<accession>A7ZE20</accession>
<feature type="chain" id="PRO_1000076846" description="Pantothenate synthetase">
    <location>
        <begin position="1"/>
        <end position="273"/>
    </location>
</feature>
<feature type="active site" description="Proton donor" evidence="1">
    <location>
        <position position="34"/>
    </location>
</feature>
<feature type="binding site" evidence="1">
    <location>
        <begin position="27"/>
        <end position="34"/>
    </location>
    <ligand>
        <name>ATP</name>
        <dbReference type="ChEBI" id="CHEBI:30616"/>
    </ligand>
</feature>
<feature type="binding site" evidence="1">
    <location>
        <position position="58"/>
    </location>
    <ligand>
        <name>(R)-pantoate</name>
        <dbReference type="ChEBI" id="CHEBI:15980"/>
    </ligand>
</feature>
<feature type="binding site" evidence="1">
    <location>
        <position position="58"/>
    </location>
    <ligand>
        <name>beta-alanine</name>
        <dbReference type="ChEBI" id="CHEBI:57966"/>
    </ligand>
</feature>
<feature type="binding site" evidence="1">
    <location>
        <begin position="144"/>
        <end position="147"/>
    </location>
    <ligand>
        <name>ATP</name>
        <dbReference type="ChEBI" id="CHEBI:30616"/>
    </ligand>
</feature>
<feature type="binding site" evidence="1">
    <location>
        <position position="150"/>
    </location>
    <ligand>
        <name>(R)-pantoate</name>
        <dbReference type="ChEBI" id="CHEBI:15980"/>
    </ligand>
</feature>
<feature type="binding site" evidence="1">
    <location>
        <position position="173"/>
    </location>
    <ligand>
        <name>ATP</name>
        <dbReference type="ChEBI" id="CHEBI:30616"/>
    </ligand>
</feature>
<feature type="binding site" evidence="1">
    <location>
        <begin position="181"/>
        <end position="184"/>
    </location>
    <ligand>
        <name>ATP</name>
        <dbReference type="ChEBI" id="CHEBI:30616"/>
    </ligand>
</feature>
<sequence>MQIIRTIKELENFVQNASGKIGFVPTMGALHDGHVSLIKKCVSENETSIVSTFVNPTQFLPGEDLDKYPRKEQSDIQICEQNGVSAIFIPDANELYFEDEPLIVAPKKLSTILEGKTRPGHFDGVLRVLNKLFRLTRANSVYMGKKDTQQLIIVQNMIKTFFLNIELVACDIVREPDGLALSSRNVYICDEDKCNALRLSRSLNKALNLIQNGEEDASEIKANMLEVLEPLKVDYVAVTDRNLNEISKVEKGNTIILVAAYVGKTRLIDNIWI</sequence>
<proteinExistence type="inferred from homology"/>
<name>PANC_CAMC1</name>
<evidence type="ECO:0000255" key="1">
    <source>
        <dbReference type="HAMAP-Rule" id="MF_00158"/>
    </source>
</evidence>
<gene>
    <name evidence="1" type="primary">panC</name>
    <name type="ordered locus">Ccon26_11720</name>
    <name type="ORF">CCC13826_0583</name>
</gene>
<keyword id="KW-0067">ATP-binding</keyword>
<keyword id="KW-0963">Cytoplasm</keyword>
<keyword id="KW-0436">Ligase</keyword>
<keyword id="KW-0547">Nucleotide-binding</keyword>
<keyword id="KW-0566">Pantothenate biosynthesis</keyword>